<gene>
    <name type="primary">exu2</name>
</gene>
<organism>
    <name type="scientific">Drosophila pseudoobscura pseudoobscura</name>
    <name type="common">Fruit fly</name>
    <dbReference type="NCBI Taxonomy" id="46245"/>
    <lineage>
        <taxon>Eukaryota</taxon>
        <taxon>Metazoa</taxon>
        <taxon>Ecdysozoa</taxon>
        <taxon>Arthropoda</taxon>
        <taxon>Hexapoda</taxon>
        <taxon>Insecta</taxon>
        <taxon>Pterygota</taxon>
        <taxon>Neoptera</taxon>
        <taxon>Endopterygota</taxon>
        <taxon>Diptera</taxon>
        <taxon>Brachycera</taxon>
        <taxon>Muscomorpha</taxon>
        <taxon>Ephydroidea</taxon>
        <taxon>Drosophilidae</taxon>
        <taxon>Drosophila</taxon>
        <taxon>Sophophora</taxon>
    </lineage>
</organism>
<sequence>MVSAISEDSASATASGQCEVVKEELPAGNYILVAVEIDTTGRRLIDEIVQLAGYTSKGNFQQYIMPYMNLNQAARQRHQIRVISIGFYRMLKSMQTYKIIKSKSEVAALMDFLNWLETLLAKQPNKEGIVMLYHDDRKFIPYMILEALKKYSLIDRFNRSVKAFANTCPMAKTFLGKHGIKNCGLRKLSMLLAKSKDGNSTKEDEHENPEGNSSITDNSGHKNQKQGAFEGSANVRAKMVYEMALQLIESESTESPESFESPESSESSEAEVKLLNAVRPFSQLLSSTILELKDQNHSLGRQNSFRPVFLNYFRTTLNYRVRAVKYRIGLAEHGFTLKSLKAIWSDKRKPGLELVLTAIDSLKTEETAELLDLLDSYYDPSKTTIKPRCKRSGNGTRRRNRAKGAASSKNGAIGAGGDNSVPDSATKPGGRPRRKRNNIRNNILGPQNTEKGSPKAEMKTSTPKSMSIKPPSEFADI</sequence>
<dbReference type="EMBL" id="L22553">
    <property type="protein sequence ID" value="AAA28523.1"/>
    <property type="molecule type" value="Genomic_DNA"/>
</dbReference>
<dbReference type="EMBL" id="CH379064">
    <property type="status" value="NOT_ANNOTATED_CDS"/>
    <property type="molecule type" value="Genomic_DNA"/>
</dbReference>
<dbReference type="EMBL" id="AY337547">
    <property type="protein sequence ID" value="AAP97898.1"/>
    <property type="molecule type" value="Genomic_DNA"/>
</dbReference>
<dbReference type="EMBL" id="AY337548">
    <property type="protein sequence ID" value="AAP97899.1"/>
    <property type="molecule type" value="Genomic_DNA"/>
</dbReference>
<dbReference type="EMBL" id="AY337549">
    <property type="protein sequence ID" value="AAP97900.1"/>
    <property type="molecule type" value="Genomic_DNA"/>
</dbReference>
<dbReference type="EMBL" id="AY337550">
    <property type="protein sequence ID" value="AAP97901.1"/>
    <property type="molecule type" value="Genomic_DNA"/>
</dbReference>
<dbReference type="EMBL" id="AY337551">
    <property type="protein sequence ID" value="AAP97902.1"/>
    <property type="molecule type" value="Genomic_DNA"/>
</dbReference>
<dbReference type="EMBL" id="AY337552">
    <property type="protein sequence ID" value="AAP97903.1"/>
    <property type="molecule type" value="Genomic_DNA"/>
</dbReference>
<dbReference type="EMBL" id="AY337553">
    <property type="protein sequence ID" value="AAP97904.1"/>
    <property type="molecule type" value="Genomic_DNA"/>
</dbReference>
<dbReference type="EMBL" id="AY337554">
    <property type="protein sequence ID" value="AAP97905.1"/>
    <property type="molecule type" value="Genomic_DNA"/>
</dbReference>
<dbReference type="EMBL" id="AY337555">
    <property type="protein sequence ID" value="AAP97906.1"/>
    <property type="molecule type" value="Genomic_DNA"/>
</dbReference>
<dbReference type="EMBL" id="AY337556">
    <property type="protein sequence ID" value="AAP97907.1"/>
    <property type="molecule type" value="Genomic_DNA"/>
</dbReference>
<dbReference type="EMBL" id="AY337557">
    <property type="protein sequence ID" value="AAP97908.1"/>
    <property type="molecule type" value="Genomic_DNA"/>
</dbReference>
<dbReference type="EMBL" id="AY337558">
    <property type="protein sequence ID" value="AAP97909.1"/>
    <property type="molecule type" value="Genomic_DNA"/>
</dbReference>
<dbReference type="EMBL" id="AY337559">
    <property type="protein sequence ID" value="AAP97910.1"/>
    <property type="molecule type" value="Genomic_DNA"/>
</dbReference>
<dbReference type="EMBL" id="AY337560">
    <property type="protein sequence ID" value="AAP97911.1"/>
    <property type="molecule type" value="Genomic_DNA"/>
</dbReference>
<dbReference type="EMBL" id="AY337561">
    <property type="protein sequence ID" value="AAP97912.1"/>
    <property type="molecule type" value="Genomic_DNA"/>
</dbReference>
<dbReference type="EMBL" id="AY337562">
    <property type="protein sequence ID" value="AAP97913.1"/>
    <property type="molecule type" value="Genomic_DNA"/>
</dbReference>
<dbReference type="EMBL" id="AY337563">
    <property type="protein sequence ID" value="AAP97914.1"/>
    <property type="molecule type" value="Genomic_DNA"/>
</dbReference>
<dbReference type="EMBL" id="AY337564">
    <property type="protein sequence ID" value="AAP97915.1"/>
    <property type="molecule type" value="Genomic_DNA"/>
</dbReference>
<dbReference type="EMBL" id="AY337565">
    <property type="protein sequence ID" value="AAP97916.1"/>
    <property type="molecule type" value="Genomic_DNA"/>
</dbReference>
<dbReference type="EMBL" id="AY337566">
    <property type="protein sequence ID" value="AAP97917.1"/>
    <property type="molecule type" value="Genomic_DNA"/>
</dbReference>
<dbReference type="EMBL" id="AY337567">
    <property type="protein sequence ID" value="AAP97918.1"/>
    <property type="molecule type" value="Genomic_DNA"/>
</dbReference>
<dbReference type="EMBL" id="AY337568">
    <property type="protein sequence ID" value="AAP97919.1"/>
    <property type="molecule type" value="Genomic_DNA"/>
</dbReference>
<dbReference type="EMBL" id="AY337569">
    <property type="protein sequence ID" value="AAP97920.1"/>
    <property type="molecule type" value="Genomic_DNA"/>
</dbReference>
<dbReference type="EMBL" id="AY337570">
    <property type="protein sequence ID" value="AAP97921.1"/>
    <property type="molecule type" value="Genomic_DNA"/>
</dbReference>
<dbReference type="EMBL" id="AY337571">
    <property type="protein sequence ID" value="AAP97922.1"/>
    <property type="molecule type" value="Genomic_DNA"/>
</dbReference>
<dbReference type="EMBL" id="AY337572">
    <property type="protein sequence ID" value="AAP97923.1"/>
    <property type="molecule type" value="Genomic_DNA"/>
</dbReference>
<dbReference type="EMBL" id="AY337573">
    <property type="protein sequence ID" value="AAP97924.1"/>
    <property type="molecule type" value="Genomic_DNA"/>
</dbReference>
<dbReference type="EMBL" id="AY337574">
    <property type="protein sequence ID" value="AAP97925.1"/>
    <property type="molecule type" value="Genomic_DNA"/>
</dbReference>
<dbReference type="EMBL" id="AY337575">
    <property type="protein sequence ID" value="AAP97926.1"/>
    <property type="molecule type" value="Genomic_DNA"/>
</dbReference>
<dbReference type="EMBL" id="AY337576">
    <property type="protein sequence ID" value="AAP97927.1"/>
    <property type="molecule type" value="Genomic_DNA"/>
</dbReference>
<dbReference type="EMBL" id="AY337577">
    <property type="protein sequence ID" value="AAP97928.1"/>
    <property type="molecule type" value="Genomic_DNA"/>
</dbReference>
<dbReference type="PIR" id="S47889">
    <property type="entry name" value="S47889"/>
</dbReference>
<dbReference type="SMR" id="Q24617"/>
<dbReference type="FunCoup" id="Q24617">
    <property type="interactions" value="73"/>
</dbReference>
<dbReference type="STRING" id="46245.Q24617"/>
<dbReference type="eggNOG" id="ENOG502QVAD">
    <property type="taxonomic scope" value="Eukaryota"/>
</dbReference>
<dbReference type="InParanoid" id="Q24617"/>
<dbReference type="Proteomes" id="UP000001819">
    <property type="component" value="Unplaced"/>
</dbReference>
<dbReference type="GO" id="GO:0042803">
    <property type="term" value="F:protein homodimerization activity"/>
    <property type="evidence" value="ECO:0007669"/>
    <property type="project" value="InterPro"/>
</dbReference>
<dbReference type="GO" id="GO:0003723">
    <property type="term" value="F:RNA binding"/>
    <property type="evidence" value="ECO:0007669"/>
    <property type="project" value="UniProtKB-KW"/>
</dbReference>
<dbReference type="GO" id="GO:0045450">
    <property type="term" value="P:bicoid mRNA localization"/>
    <property type="evidence" value="ECO:0007669"/>
    <property type="project" value="InterPro"/>
</dbReference>
<dbReference type="InterPro" id="IPR037998">
    <property type="entry name" value="Exu"/>
</dbReference>
<dbReference type="InterPro" id="IPR054362">
    <property type="entry name" value="Exu_RNase_H-like"/>
</dbReference>
<dbReference type="InterPro" id="IPR040941">
    <property type="entry name" value="SAM_Exu"/>
</dbReference>
<dbReference type="PANTHER" id="PTHR12384">
    <property type="entry name" value="MATERNAL PROTEIN EXUPERANTIA"/>
    <property type="match status" value="1"/>
</dbReference>
<dbReference type="PANTHER" id="PTHR12384:SF2">
    <property type="entry name" value="MATERNAL PROTEIN EXUPERANTIA"/>
    <property type="match status" value="1"/>
</dbReference>
<dbReference type="Pfam" id="PF22123">
    <property type="entry name" value="Exu_RNase_H_like"/>
    <property type="match status" value="1"/>
</dbReference>
<dbReference type="Pfam" id="PF18609">
    <property type="entry name" value="SAM_Exu"/>
    <property type="match status" value="1"/>
</dbReference>
<keyword id="KW-0217">Developmental protein</keyword>
<keyword id="KW-1185">Reference proteome</keyword>
<keyword id="KW-0694">RNA-binding</keyword>
<reference key="1">
    <citation type="journal article" date="1994" name="Genetics">
        <title>Components acting in localization of bicoid mRNA are conserved among Drosophila species.</title>
        <authorList>
            <person name="Luk S.K.-S."/>
            <person name="Kilpatrick M."/>
            <person name="Kerr K."/>
            <person name="Macdonald P.M."/>
        </authorList>
    </citation>
    <scope>NUCLEOTIDE SEQUENCE [GENOMIC DNA]</scope>
</reference>
<reference key="2">
    <citation type="journal article" date="2005" name="Genome Res.">
        <title>Comparative genome sequencing of Drosophila pseudoobscura: chromosomal, gene, and cis-element evolution.</title>
        <authorList>
            <person name="Richards S."/>
            <person name="Liu Y."/>
            <person name="Bettencourt B.R."/>
            <person name="Hradecky P."/>
            <person name="Letovsky S."/>
            <person name="Nielsen R."/>
            <person name="Thornton K."/>
            <person name="Hubisz M.J."/>
            <person name="Chen R."/>
            <person name="Meisel R.P."/>
            <person name="Couronne O."/>
            <person name="Hua S."/>
            <person name="Smith M.A."/>
            <person name="Zhang P."/>
            <person name="Liu J."/>
            <person name="Bussemaker H.J."/>
            <person name="van Batenburg M.F."/>
            <person name="Howells S.L."/>
            <person name="Scherer S.E."/>
            <person name="Sodergren E."/>
            <person name="Matthews B.B."/>
            <person name="Crosby M.A."/>
            <person name="Schroeder A.J."/>
            <person name="Ortiz-Barrientos D."/>
            <person name="Rives C.M."/>
            <person name="Metzker M.L."/>
            <person name="Muzny D.M."/>
            <person name="Scott G."/>
            <person name="Steffen D."/>
            <person name="Wheeler D.A."/>
            <person name="Worley K.C."/>
            <person name="Havlak P."/>
            <person name="Durbin K.J."/>
            <person name="Egan A."/>
            <person name="Gill R."/>
            <person name="Hume J."/>
            <person name="Morgan M.B."/>
            <person name="Miner G."/>
            <person name="Hamilton C."/>
            <person name="Huang Y."/>
            <person name="Waldron L."/>
            <person name="Verduzco D."/>
            <person name="Clerc-Blankenburg K.P."/>
            <person name="Dubchak I."/>
            <person name="Noor M.A.F."/>
            <person name="Anderson W."/>
            <person name="White K.P."/>
            <person name="Clark A.G."/>
            <person name="Schaeffer S.W."/>
            <person name="Gelbart W.M."/>
            <person name="Weinstock G.M."/>
            <person name="Gibbs R.A."/>
        </authorList>
    </citation>
    <scope>NUCLEOTIDE SEQUENCE [LARGE SCALE GENOMIC DNA]</scope>
    <source>
        <strain>MV2-25 / Tucson 14011-0121.94</strain>
    </source>
</reference>
<reference key="3">
    <citation type="journal article" date="2003" name="Genet. Res.">
        <title>Unusual pattern of single nucleotide polymorphism at the exuperantia2 locus of Drosophila pseudoobscura.</title>
        <authorList>
            <person name="Yi S."/>
            <person name="Charlesworth B."/>
        </authorList>
    </citation>
    <scope>NUCLEOTIDE SEQUENCE [GENOMIC DNA] OF 65-388</scope>
    <source>
        <strain>afc1</strain>
        <strain>afc3</strain>
        <strain>afc7</strain>
        <strain>f17</strain>
        <strain>f20</strain>
        <strain>jr10</strain>
        <strain>jr274</strain>
        <strain>m32</strain>
        <strain>m48</strain>
        <strain>m52</strain>
        <strain>msh15</strain>
        <strain>msh2</strain>
        <strain>msh37</strain>
        <strain>msh9</strain>
        <strain>ps1</strain>
        <strain>ps10</strain>
        <strain>ps11</strain>
        <strain>ps12</strain>
        <strain>ps13</strain>
        <strain>ps14</strain>
        <strain>ps15</strain>
        <strain>ps16</strain>
        <strain>ps17</strain>
        <strain>ps18</strain>
        <strain>ps2</strain>
        <strain>ps3</strain>
        <strain>ps4</strain>
        <strain>ps5</strain>
        <strain>ps7</strain>
        <strain>ps8</strain>
        <strain>ps9</strain>
    </source>
</reference>
<name>EXU2_DROPS</name>
<proteinExistence type="inferred from homology"/>
<protein>
    <recommendedName>
        <fullName>Maternal protein exuperantia-2</fullName>
    </recommendedName>
</protein>
<comment type="function">
    <text evidence="1">Ensures the proper localization of the mRNA of the bicoid gene to the anterior regions of the oocyte thus playing a fundamental role in the establishment of the polarity of the oocyte. May bind the bcd mRNA (By similarity).</text>
</comment>
<evidence type="ECO:0000250" key="1"/>
<evidence type="ECO:0000256" key="2">
    <source>
        <dbReference type="SAM" id="MobiDB-lite"/>
    </source>
</evidence>
<evidence type="ECO:0000305" key="3"/>
<feature type="chain" id="PRO_0000087144" description="Maternal protein exuperantia-2">
    <location>
        <begin position="1"/>
        <end position="477"/>
    </location>
</feature>
<feature type="region of interest" description="Disordered" evidence="2">
    <location>
        <begin position="196"/>
        <end position="226"/>
    </location>
</feature>
<feature type="region of interest" description="Disordered" evidence="2">
    <location>
        <begin position="384"/>
        <end position="477"/>
    </location>
</feature>
<feature type="compositionally biased region" description="Basic and acidic residues" evidence="2">
    <location>
        <begin position="196"/>
        <end position="209"/>
    </location>
</feature>
<feature type="compositionally biased region" description="Basic residues" evidence="2">
    <location>
        <begin position="385"/>
        <end position="402"/>
    </location>
</feature>
<feature type="sequence variant" description="In strain: msh9.">
    <original>G</original>
    <variation>S</variation>
    <location>
        <position position="220"/>
    </location>
</feature>
<feature type="sequence variant" description="In strain: afc1, afc7, f17, m32, msh9, msh37, ps1, ps2, ps3, ps9, ps10, ps11, ps12, ps14 and ps15.">
    <original>H</original>
    <variation>P</variation>
    <location>
        <position position="221"/>
    </location>
</feature>
<feature type="sequence variant" description="In strain: m32, msh37, ps14 and ps15.">
    <original>S</original>
    <variation>T</variation>
    <location>
        <position position="267"/>
    </location>
</feature>
<feature type="sequence variant" description="In strain: afc1, m32, msh37, ps14 and ps15.">
    <original>I</original>
    <variation>V</variation>
    <location>
        <position position="289"/>
    </location>
</feature>
<feature type="sequence variant" description="In strain: ps4.">
    <original>T</original>
    <variation>A</variation>
    <location>
        <position position="315"/>
    </location>
</feature>
<feature type="sequence variant" description="In strain: f17.">
    <original>T</original>
    <variation>A</variation>
    <location>
        <position position="367"/>
    </location>
</feature>
<feature type="sequence variant" description="In strain: f17.">
    <original>K</original>
    <variation>R</variation>
    <location>
        <position position="382"/>
    </location>
</feature>
<feature type="sequence conflict" description="In Ref. 3." evidence="3" ref="3">
    <original>G</original>
    <variation>A</variation>
    <location>
        <position position="329"/>
    </location>
</feature>
<accession>Q24617</accession>
<accession>Q7YSK7</accession>
<accession>Q7YSK9</accession>
<accession>Q7YSR3</accession>
<accession>Q7YXI5</accession>
<accession>Q7YXI6</accession>
<accession>Q7YXI7</accession>
<accession>Q7YXI8</accession>